<name>ACCA_BRUSU</name>
<comment type="function">
    <text evidence="1">Component of the acetyl coenzyme A carboxylase (ACC) complex. First, biotin carboxylase catalyzes the carboxylation of biotin on its carrier protein (BCCP) and then the CO(2) group is transferred by the carboxyltransferase to acetyl-CoA to form malonyl-CoA.</text>
</comment>
<comment type="catalytic activity">
    <reaction evidence="1">
        <text>N(6)-carboxybiotinyl-L-lysyl-[protein] + acetyl-CoA = N(6)-biotinyl-L-lysyl-[protein] + malonyl-CoA</text>
        <dbReference type="Rhea" id="RHEA:54728"/>
        <dbReference type="Rhea" id="RHEA-COMP:10505"/>
        <dbReference type="Rhea" id="RHEA-COMP:10506"/>
        <dbReference type="ChEBI" id="CHEBI:57288"/>
        <dbReference type="ChEBI" id="CHEBI:57384"/>
        <dbReference type="ChEBI" id="CHEBI:83144"/>
        <dbReference type="ChEBI" id="CHEBI:83145"/>
        <dbReference type="EC" id="2.1.3.15"/>
    </reaction>
</comment>
<comment type="pathway">
    <text evidence="1">Lipid metabolism; malonyl-CoA biosynthesis; malonyl-CoA from acetyl-CoA: step 1/1.</text>
</comment>
<comment type="subunit">
    <text evidence="1">Acetyl-CoA carboxylase is a heterohexamer composed of biotin carboxyl carrier protein (AccB), biotin carboxylase (AccC) and two subunits each of ACCase subunit alpha (AccA) and ACCase subunit beta (AccD).</text>
</comment>
<comment type="subcellular location">
    <subcellularLocation>
        <location evidence="1">Cytoplasm</location>
    </subcellularLocation>
</comment>
<comment type="similarity">
    <text evidence="1">Belongs to the AccA family.</text>
</comment>
<proteinExistence type="inferred from homology"/>
<feature type="chain" id="PRO_0000223744" description="Acetyl-coenzyme A carboxylase carboxyl transferase subunit alpha">
    <location>
        <begin position="1"/>
        <end position="317"/>
    </location>
</feature>
<feature type="domain" description="CoA carboxyltransferase C-terminal" evidence="2">
    <location>
        <begin position="40"/>
        <end position="293"/>
    </location>
</feature>
<sequence>MYNYLDFEKPVADLEGQILELKKLAQEQGSVEMGDEISRLEKRSADALKDIYRKLTPWQKAQIARHPDRPHCLEYIDRLFTEFTPLAGDRKFANDEALQAGFGRFNGTPVAIIGQEKGSDTKTRLKHNFGSARPEGYRKAVRIMEMADRFQLPLITFVDTAGAYPGVSAEERGQAEAIARSTAECLKLRVPVISIIIGEGGSGGAIAIAVANRVYMLEHSIYSVISPEGAASILWHDSTRAKDAASNMRITAQDLFDLKIIDGIIPEPLGGAHRGKESVIDATGDIIAASLRSMKDIDGETLKQERRQKFLEIGRNI</sequence>
<evidence type="ECO:0000255" key="1">
    <source>
        <dbReference type="HAMAP-Rule" id="MF_00823"/>
    </source>
</evidence>
<evidence type="ECO:0000255" key="2">
    <source>
        <dbReference type="PROSITE-ProRule" id="PRU01137"/>
    </source>
</evidence>
<accession>Q8FY57</accession>
<accession>G0K8Q2</accession>
<gene>
    <name evidence="1" type="primary">accA</name>
    <name type="ordered locus">BR2032</name>
    <name type="ordered locus">BS1330_I2026</name>
</gene>
<keyword id="KW-0067">ATP-binding</keyword>
<keyword id="KW-0963">Cytoplasm</keyword>
<keyword id="KW-0275">Fatty acid biosynthesis</keyword>
<keyword id="KW-0276">Fatty acid metabolism</keyword>
<keyword id="KW-0444">Lipid biosynthesis</keyword>
<keyword id="KW-0443">Lipid metabolism</keyword>
<keyword id="KW-0547">Nucleotide-binding</keyword>
<keyword id="KW-0808">Transferase</keyword>
<organism>
    <name type="scientific">Brucella suis biovar 1 (strain 1330)</name>
    <dbReference type="NCBI Taxonomy" id="204722"/>
    <lineage>
        <taxon>Bacteria</taxon>
        <taxon>Pseudomonadati</taxon>
        <taxon>Pseudomonadota</taxon>
        <taxon>Alphaproteobacteria</taxon>
        <taxon>Hyphomicrobiales</taxon>
        <taxon>Brucellaceae</taxon>
        <taxon>Brucella/Ochrobactrum group</taxon>
        <taxon>Brucella</taxon>
    </lineage>
</organism>
<reference key="1">
    <citation type="journal article" date="2002" name="Proc. Natl. Acad. Sci. U.S.A.">
        <title>The Brucella suis genome reveals fundamental similarities between animal and plant pathogens and symbionts.</title>
        <authorList>
            <person name="Paulsen I.T."/>
            <person name="Seshadri R."/>
            <person name="Nelson K.E."/>
            <person name="Eisen J.A."/>
            <person name="Heidelberg J.F."/>
            <person name="Read T.D."/>
            <person name="Dodson R.J."/>
            <person name="Umayam L.A."/>
            <person name="Brinkac L.M."/>
            <person name="Beanan M.J."/>
            <person name="Daugherty S.C."/>
            <person name="DeBoy R.T."/>
            <person name="Durkin A.S."/>
            <person name="Kolonay J.F."/>
            <person name="Madupu R."/>
            <person name="Nelson W.C."/>
            <person name="Ayodeji B."/>
            <person name="Kraul M."/>
            <person name="Shetty J."/>
            <person name="Malek J.A."/>
            <person name="Van Aken S.E."/>
            <person name="Riedmuller S."/>
            <person name="Tettelin H."/>
            <person name="Gill S.R."/>
            <person name="White O."/>
            <person name="Salzberg S.L."/>
            <person name="Hoover D.L."/>
            <person name="Lindler L.E."/>
            <person name="Halling S.M."/>
            <person name="Boyle S.M."/>
            <person name="Fraser C.M."/>
        </authorList>
    </citation>
    <scope>NUCLEOTIDE SEQUENCE [LARGE SCALE GENOMIC DNA]</scope>
    <source>
        <strain>1330</strain>
    </source>
</reference>
<reference key="2">
    <citation type="journal article" date="2011" name="J. Bacteriol.">
        <title>Revised genome sequence of Brucella suis 1330.</title>
        <authorList>
            <person name="Tae H."/>
            <person name="Shallom S."/>
            <person name="Settlage R."/>
            <person name="Preston D."/>
            <person name="Adams L.G."/>
            <person name="Garner H.R."/>
        </authorList>
    </citation>
    <scope>NUCLEOTIDE SEQUENCE [LARGE SCALE GENOMIC DNA]</scope>
    <source>
        <strain>1330</strain>
    </source>
</reference>
<protein>
    <recommendedName>
        <fullName evidence="1">Acetyl-coenzyme A carboxylase carboxyl transferase subunit alpha</fullName>
        <shortName evidence="1">ACCase subunit alpha</shortName>
        <shortName evidence="1">Acetyl-CoA carboxylase carboxyltransferase subunit alpha</shortName>
        <ecNumber evidence="1">2.1.3.15</ecNumber>
    </recommendedName>
</protein>
<dbReference type="EC" id="2.1.3.15" evidence="1"/>
<dbReference type="EMBL" id="AE014291">
    <property type="protein sequence ID" value="AAN30922.1"/>
    <property type="molecule type" value="Genomic_DNA"/>
</dbReference>
<dbReference type="EMBL" id="CP002997">
    <property type="protein sequence ID" value="AEM19339.1"/>
    <property type="molecule type" value="Genomic_DNA"/>
</dbReference>
<dbReference type="PIR" id="AB3257">
    <property type="entry name" value="AB3257"/>
</dbReference>
<dbReference type="RefSeq" id="WP_002965096.1">
    <property type="nucleotide sequence ID" value="NZ_KN046804.1"/>
</dbReference>
<dbReference type="SMR" id="Q8FY57"/>
<dbReference type="KEGG" id="bms:BR2032"/>
<dbReference type="KEGG" id="bsi:BS1330_I2026"/>
<dbReference type="PATRIC" id="fig|204722.21.peg.1237"/>
<dbReference type="HOGENOM" id="CLU_015486_0_2_5"/>
<dbReference type="PhylomeDB" id="Q8FY57"/>
<dbReference type="UniPathway" id="UPA00655">
    <property type="reaction ID" value="UER00711"/>
</dbReference>
<dbReference type="Proteomes" id="UP000007104">
    <property type="component" value="Chromosome I"/>
</dbReference>
<dbReference type="GO" id="GO:0009317">
    <property type="term" value="C:acetyl-CoA carboxylase complex"/>
    <property type="evidence" value="ECO:0007669"/>
    <property type="project" value="InterPro"/>
</dbReference>
<dbReference type="GO" id="GO:0003989">
    <property type="term" value="F:acetyl-CoA carboxylase activity"/>
    <property type="evidence" value="ECO:0007669"/>
    <property type="project" value="InterPro"/>
</dbReference>
<dbReference type="GO" id="GO:0005524">
    <property type="term" value="F:ATP binding"/>
    <property type="evidence" value="ECO:0007669"/>
    <property type="project" value="UniProtKB-KW"/>
</dbReference>
<dbReference type="GO" id="GO:0016743">
    <property type="term" value="F:carboxyl- or carbamoyltransferase activity"/>
    <property type="evidence" value="ECO:0007669"/>
    <property type="project" value="UniProtKB-UniRule"/>
</dbReference>
<dbReference type="GO" id="GO:0006633">
    <property type="term" value="P:fatty acid biosynthetic process"/>
    <property type="evidence" value="ECO:0007669"/>
    <property type="project" value="UniProtKB-KW"/>
</dbReference>
<dbReference type="GO" id="GO:2001295">
    <property type="term" value="P:malonyl-CoA biosynthetic process"/>
    <property type="evidence" value="ECO:0007669"/>
    <property type="project" value="UniProtKB-UniRule"/>
</dbReference>
<dbReference type="Gene3D" id="3.90.226.10">
    <property type="entry name" value="2-enoyl-CoA Hydratase, Chain A, domain 1"/>
    <property type="match status" value="1"/>
</dbReference>
<dbReference type="HAMAP" id="MF_00823">
    <property type="entry name" value="AcetylCoA_CT_alpha"/>
    <property type="match status" value="1"/>
</dbReference>
<dbReference type="InterPro" id="IPR001095">
    <property type="entry name" value="Acetyl_CoA_COase_a_su"/>
</dbReference>
<dbReference type="InterPro" id="IPR029045">
    <property type="entry name" value="ClpP/crotonase-like_dom_sf"/>
</dbReference>
<dbReference type="InterPro" id="IPR011763">
    <property type="entry name" value="COA_CT_C"/>
</dbReference>
<dbReference type="NCBIfam" id="TIGR00513">
    <property type="entry name" value="accA"/>
    <property type="match status" value="1"/>
</dbReference>
<dbReference type="NCBIfam" id="NF041504">
    <property type="entry name" value="AccA_sub"/>
    <property type="match status" value="1"/>
</dbReference>
<dbReference type="NCBIfam" id="NF004344">
    <property type="entry name" value="PRK05724.1"/>
    <property type="match status" value="1"/>
</dbReference>
<dbReference type="PANTHER" id="PTHR42853">
    <property type="entry name" value="ACETYL-COENZYME A CARBOXYLASE CARBOXYL TRANSFERASE SUBUNIT ALPHA"/>
    <property type="match status" value="1"/>
</dbReference>
<dbReference type="PANTHER" id="PTHR42853:SF3">
    <property type="entry name" value="ACETYL-COENZYME A CARBOXYLASE CARBOXYL TRANSFERASE SUBUNIT ALPHA, CHLOROPLASTIC"/>
    <property type="match status" value="1"/>
</dbReference>
<dbReference type="Pfam" id="PF03255">
    <property type="entry name" value="ACCA"/>
    <property type="match status" value="1"/>
</dbReference>
<dbReference type="PRINTS" id="PR01069">
    <property type="entry name" value="ACCCTRFRASEA"/>
</dbReference>
<dbReference type="SUPFAM" id="SSF52096">
    <property type="entry name" value="ClpP/crotonase"/>
    <property type="match status" value="1"/>
</dbReference>
<dbReference type="PROSITE" id="PS50989">
    <property type="entry name" value="COA_CT_CTER"/>
    <property type="match status" value="1"/>
</dbReference>